<comment type="function">
    <text evidence="1">May help in the organization of the PsaL subunit.</text>
</comment>
<comment type="subcellular location">
    <subcellularLocation>
        <location evidence="1">Plastid</location>
        <location evidence="1">Chloroplast thylakoid membrane</location>
        <topology evidence="1">Single-pass membrane protein</topology>
    </subcellularLocation>
</comment>
<comment type="similarity">
    <text evidence="3">Belongs to the PsaI family.</text>
</comment>
<dbReference type="EMBL" id="X61188">
    <property type="protein sequence ID" value="CAA43491.1"/>
    <property type="molecule type" value="Genomic_DNA"/>
</dbReference>
<dbReference type="EMBL" id="X86563">
    <property type="protein sequence ID" value="CAA60295.1"/>
    <property type="molecule type" value="Genomic_DNA"/>
</dbReference>
<dbReference type="PIR" id="S58561">
    <property type="entry name" value="S58561"/>
</dbReference>
<dbReference type="RefSeq" id="NP_043034.1">
    <property type="nucleotide sequence ID" value="NC_001666.2"/>
</dbReference>
<dbReference type="PDB" id="5ZJI">
    <property type="method" value="EM"/>
    <property type="resolution" value="3.30 A"/>
    <property type="chains" value="I=1-36"/>
</dbReference>
<dbReference type="PDBsum" id="5ZJI"/>
<dbReference type="EMDB" id="EMD-6932"/>
<dbReference type="SMR" id="P30980"/>
<dbReference type="FunCoup" id="P30980">
    <property type="interactions" value="33"/>
</dbReference>
<dbReference type="IntAct" id="P30980">
    <property type="interactions" value="1"/>
</dbReference>
<dbReference type="STRING" id="4577.P30980"/>
<dbReference type="PaxDb" id="4577-GRMZM2G509747_P01"/>
<dbReference type="GeneID" id="845197"/>
<dbReference type="KEGG" id="zma:845197"/>
<dbReference type="MaizeGDB" id="57460"/>
<dbReference type="eggNOG" id="ENOG502SE4W">
    <property type="taxonomic scope" value="Eukaryota"/>
</dbReference>
<dbReference type="HOGENOM" id="CLU_215282_1_0_1"/>
<dbReference type="InParanoid" id="P30980"/>
<dbReference type="OrthoDB" id="35618at2759"/>
<dbReference type="Proteomes" id="UP000007305">
    <property type="component" value="Chloroplast"/>
</dbReference>
<dbReference type="GO" id="GO:0009535">
    <property type="term" value="C:chloroplast thylakoid membrane"/>
    <property type="evidence" value="ECO:0007669"/>
    <property type="project" value="UniProtKB-SubCell"/>
</dbReference>
<dbReference type="GO" id="GO:0009522">
    <property type="term" value="C:photosystem I"/>
    <property type="evidence" value="ECO:0007669"/>
    <property type="project" value="UniProtKB-KW"/>
</dbReference>
<dbReference type="GO" id="GO:0015979">
    <property type="term" value="P:photosynthesis"/>
    <property type="evidence" value="ECO:0007669"/>
    <property type="project" value="UniProtKB-UniRule"/>
</dbReference>
<dbReference type="HAMAP" id="MF_00431">
    <property type="entry name" value="PSI_PsaI"/>
    <property type="match status" value="1"/>
</dbReference>
<dbReference type="InterPro" id="IPR001302">
    <property type="entry name" value="PSI_PsaI"/>
</dbReference>
<dbReference type="InterPro" id="IPR036357">
    <property type="entry name" value="PSI_PsaI_sf"/>
</dbReference>
<dbReference type="NCBIfam" id="TIGR03052">
    <property type="entry name" value="PS_I_psaI"/>
    <property type="match status" value="1"/>
</dbReference>
<dbReference type="PANTHER" id="PTHR35775">
    <property type="match status" value="1"/>
</dbReference>
<dbReference type="PANTHER" id="PTHR35775:SF2">
    <property type="entry name" value="PHOTOSYSTEM I REACTION CENTER SUBUNIT VIII"/>
    <property type="match status" value="1"/>
</dbReference>
<dbReference type="Pfam" id="PF00796">
    <property type="entry name" value="PSI_8"/>
    <property type="match status" value="1"/>
</dbReference>
<dbReference type="SUPFAM" id="SSF81540">
    <property type="entry name" value="Subunit VIII of photosystem I reaction centre, PsaI"/>
    <property type="match status" value="1"/>
</dbReference>
<keyword id="KW-0002">3D-structure</keyword>
<keyword id="KW-0150">Chloroplast</keyword>
<keyword id="KW-0472">Membrane</keyword>
<keyword id="KW-0602">Photosynthesis</keyword>
<keyword id="KW-0603">Photosystem I</keyword>
<keyword id="KW-0934">Plastid</keyword>
<keyword id="KW-1185">Reference proteome</keyword>
<keyword id="KW-0793">Thylakoid</keyword>
<keyword id="KW-0812">Transmembrane</keyword>
<keyword id="KW-1133">Transmembrane helix</keyword>
<sequence>MTDFNLPSIFVPLVGLVFPAIAMTSLFLYVQKNKIV</sequence>
<protein>
    <recommendedName>
        <fullName>Photosystem I reaction center subunit VIII</fullName>
        <shortName>PSI-I</shortName>
    </recommendedName>
</protein>
<name>PSAI_MAIZE</name>
<proteinExistence type="evidence at protein level"/>
<organism>
    <name type="scientific">Zea mays</name>
    <name type="common">Maize</name>
    <dbReference type="NCBI Taxonomy" id="4577"/>
    <lineage>
        <taxon>Eukaryota</taxon>
        <taxon>Viridiplantae</taxon>
        <taxon>Streptophyta</taxon>
        <taxon>Embryophyta</taxon>
        <taxon>Tracheophyta</taxon>
        <taxon>Spermatophyta</taxon>
        <taxon>Magnoliopsida</taxon>
        <taxon>Liliopsida</taxon>
        <taxon>Poales</taxon>
        <taxon>Poaceae</taxon>
        <taxon>PACMAD clade</taxon>
        <taxon>Panicoideae</taxon>
        <taxon>Andropogonodae</taxon>
        <taxon>Andropogoneae</taxon>
        <taxon>Tripsacinae</taxon>
        <taxon>Zea</taxon>
    </lineage>
</organism>
<gene>
    <name type="primary">psaI</name>
</gene>
<accession>P30980</accession>
<evidence type="ECO:0000250" key="1"/>
<evidence type="ECO:0000255" key="2"/>
<evidence type="ECO:0000305" key="3"/>
<evidence type="ECO:0007829" key="4">
    <source>
        <dbReference type="PDB" id="5ZJI"/>
    </source>
</evidence>
<feature type="chain" id="PRO_0000194658" description="Photosystem I reaction center subunit VIII">
    <location>
        <begin position="1"/>
        <end position="36"/>
    </location>
</feature>
<feature type="transmembrane region" description="Helical" evidence="2">
    <location>
        <begin position="10"/>
        <end position="30"/>
    </location>
</feature>
<feature type="helix" evidence="4">
    <location>
        <begin position="7"/>
        <end position="15"/>
    </location>
</feature>
<feature type="helix" evidence="4">
    <location>
        <begin position="17"/>
        <end position="30"/>
    </location>
</feature>
<geneLocation type="chloroplast"/>
<reference key="1">
    <citation type="submission" date="1992-08" db="EMBL/GenBank/DDBJ databases">
        <authorList>
            <person name="Rodermel S.R."/>
        </authorList>
    </citation>
    <scope>NUCLEOTIDE SEQUENCE [GENOMIC DNA]</scope>
</reference>
<reference key="2">
    <citation type="journal article" date="1995" name="J. Mol. Biol.">
        <title>Complete sequence of the maize chloroplast genome: gene content, hotspots of divergence and fine tuning of genetic information by transcript editing.</title>
        <authorList>
            <person name="Maier R.M."/>
            <person name="Neckermann K."/>
            <person name="Igloi G.L."/>
            <person name="Koessel H."/>
        </authorList>
    </citation>
    <scope>NUCLEOTIDE SEQUENCE [LARGE SCALE GENOMIC DNA]</scope>
    <source>
        <strain>cv. B73</strain>
    </source>
</reference>